<organism>
    <name type="scientific">Arabidopsis thaliana</name>
    <name type="common">Mouse-ear cress</name>
    <dbReference type="NCBI Taxonomy" id="3702"/>
    <lineage>
        <taxon>Eukaryota</taxon>
        <taxon>Viridiplantae</taxon>
        <taxon>Streptophyta</taxon>
        <taxon>Embryophyta</taxon>
        <taxon>Tracheophyta</taxon>
        <taxon>Spermatophyta</taxon>
        <taxon>Magnoliopsida</taxon>
        <taxon>eudicotyledons</taxon>
        <taxon>Gunneridae</taxon>
        <taxon>Pentapetalae</taxon>
        <taxon>rosids</taxon>
        <taxon>malvids</taxon>
        <taxon>Brassicales</taxon>
        <taxon>Brassicaceae</taxon>
        <taxon>Camelineae</taxon>
        <taxon>Arabidopsis</taxon>
    </lineage>
</organism>
<accession>Q9FXI9</accession>
<accession>Q9LNS3</accession>
<protein>
    <recommendedName>
        <fullName>Endoglucanase 2</fullName>
        <ecNumber>3.2.1.4</ecNumber>
    </recommendedName>
    <alternativeName>
        <fullName>Endo-1,4-beta glucanase 2</fullName>
    </alternativeName>
</protein>
<comment type="catalytic activity">
    <reaction>
        <text>Endohydrolysis of (1-&gt;4)-beta-D-glucosidic linkages in cellulose, lichenin and cereal beta-D-glucans.</text>
        <dbReference type="EC" id="3.2.1.4"/>
    </reaction>
</comment>
<comment type="subcellular location">
    <subcellularLocation>
        <location evidence="1">Secreted</location>
    </subcellularLocation>
</comment>
<comment type="similarity">
    <text evidence="4 5">Belongs to the glycosyl hydrolase 9 (cellulase E) family.</text>
</comment>
<dbReference type="EC" id="3.2.1.4"/>
<dbReference type="EMBL" id="AC007797">
    <property type="protein sequence ID" value="AAG12562.1"/>
    <property type="molecule type" value="Genomic_DNA"/>
</dbReference>
<dbReference type="EMBL" id="AC022472">
    <property type="protein sequence ID" value="AAF79918.1"/>
    <property type="molecule type" value="Genomic_DNA"/>
</dbReference>
<dbReference type="EMBL" id="CP002684">
    <property type="protein sequence ID" value="AEE29915.1"/>
    <property type="molecule type" value="Genomic_DNA"/>
</dbReference>
<dbReference type="EMBL" id="CP002684">
    <property type="protein sequence ID" value="ANM59313.1"/>
    <property type="molecule type" value="Genomic_DNA"/>
</dbReference>
<dbReference type="EMBL" id="AY048245">
    <property type="protein sequence ID" value="AAK82507.1"/>
    <property type="molecule type" value="mRNA"/>
</dbReference>
<dbReference type="EMBL" id="AY113063">
    <property type="protein sequence ID" value="AAM47371.1"/>
    <property type="molecule type" value="mRNA"/>
</dbReference>
<dbReference type="PIR" id="G86332">
    <property type="entry name" value="G86332"/>
</dbReference>
<dbReference type="RefSeq" id="NP_001321680.1">
    <property type="nucleotide sequence ID" value="NM_001332419.1"/>
</dbReference>
<dbReference type="RefSeq" id="NP_173423.1">
    <property type="nucleotide sequence ID" value="NM_101849.2"/>
</dbReference>
<dbReference type="SMR" id="Q9FXI9"/>
<dbReference type="FunCoup" id="Q9FXI9">
    <property type="interactions" value="14"/>
</dbReference>
<dbReference type="STRING" id="3702.Q9FXI9"/>
<dbReference type="CAZy" id="GH9">
    <property type="family name" value="Glycoside Hydrolase Family 9"/>
</dbReference>
<dbReference type="GlyGen" id="Q9FXI9">
    <property type="glycosylation" value="4 sites"/>
</dbReference>
<dbReference type="PaxDb" id="3702-AT1G19940.1"/>
<dbReference type="ProteomicsDB" id="247274"/>
<dbReference type="EnsemblPlants" id="AT1G19940.1">
    <property type="protein sequence ID" value="AT1G19940.1"/>
    <property type="gene ID" value="AT1G19940"/>
</dbReference>
<dbReference type="EnsemblPlants" id="AT1G19940.2">
    <property type="protein sequence ID" value="AT1G19940.2"/>
    <property type="gene ID" value="AT1G19940"/>
</dbReference>
<dbReference type="GeneID" id="838583"/>
<dbReference type="Gramene" id="AT1G19940.1">
    <property type="protein sequence ID" value="AT1G19940.1"/>
    <property type="gene ID" value="AT1G19940"/>
</dbReference>
<dbReference type="Gramene" id="AT1G19940.2">
    <property type="protein sequence ID" value="AT1G19940.2"/>
    <property type="gene ID" value="AT1G19940"/>
</dbReference>
<dbReference type="KEGG" id="ath:AT1G19940"/>
<dbReference type="Araport" id="AT1G19940"/>
<dbReference type="TAIR" id="AT1G19940">
    <property type="gene designation" value="GH9B5"/>
</dbReference>
<dbReference type="eggNOG" id="ENOG502QQZQ">
    <property type="taxonomic scope" value="Eukaryota"/>
</dbReference>
<dbReference type="HOGENOM" id="CLU_008926_1_4_1"/>
<dbReference type="InParanoid" id="Q9FXI9"/>
<dbReference type="OMA" id="SKGWIWW"/>
<dbReference type="PhylomeDB" id="Q9FXI9"/>
<dbReference type="BioCyc" id="ARA:AT1G19940-MONOMER"/>
<dbReference type="PRO" id="PR:Q9FXI9"/>
<dbReference type="Proteomes" id="UP000006548">
    <property type="component" value="Chromosome 1"/>
</dbReference>
<dbReference type="ExpressionAtlas" id="Q9FXI9">
    <property type="expression patterns" value="baseline and differential"/>
</dbReference>
<dbReference type="GO" id="GO:0005576">
    <property type="term" value="C:extracellular region"/>
    <property type="evidence" value="ECO:0007669"/>
    <property type="project" value="UniProtKB-SubCell"/>
</dbReference>
<dbReference type="GO" id="GO:0008810">
    <property type="term" value="F:cellulase activity"/>
    <property type="evidence" value="ECO:0007669"/>
    <property type="project" value="UniProtKB-EC"/>
</dbReference>
<dbReference type="GO" id="GO:0071555">
    <property type="term" value="P:cell wall organization"/>
    <property type="evidence" value="ECO:0007669"/>
    <property type="project" value="UniProtKB-KW"/>
</dbReference>
<dbReference type="GO" id="GO:0030245">
    <property type="term" value="P:cellulose catabolic process"/>
    <property type="evidence" value="ECO:0007669"/>
    <property type="project" value="UniProtKB-KW"/>
</dbReference>
<dbReference type="FunFam" id="1.50.10.10:FF:000020">
    <property type="entry name" value="Endoglucanase"/>
    <property type="match status" value="1"/>
</dbReference>
<dbReference type="Gene3D" id="1.50.10.10">
    <property type="match status" value="1"/>
</dbReference>
<dbReference type="InterPro" id="IPR008928">
    <property type="entry name" value="6-hairpin_glycosidase_sf"/>
</dbReference>
<dbReference type="InterPro" id="IPR012341">
    <property type="entry name" value="6hp_glycosidase-like_sf"/>
</dbReference>
<dbReference type="InterPro" id="IPR001701">
    <property type="entry name" value="Glyco_hydro_9"/>
</dbReference>
<dbReference type="InterPro" id="IPR018221">
    <property type="entry name" value="Glyco_hydro_9_His_AS"/>
</dbReference>
<dbReference type="PANTHER" id="PTHR22298">
    <property type="entry name" value="ENDO-1,4-BETA-GLUCANASE"/>
    <property type="match status" value="1"/>
</dbReference>
<dbReference type="Pfam" id="PF00759">
    <property type="entry name" value="Glyco_hydro_9"/>
    <property type="match status" value="1"/>
</dbReference>
<dbReference type="SUPFAM" id="SSF48208">
    <property type="entry name" value="Six-hairpin glycosidases"/>
    <property type="match status" value="1"/>
</dbReference>
<dbReference type="PROSITE" id="PS60032">
    <property type="entry name" value="GH9_1"/>
    <property type="match status" value="1"/>
</dbReference>
<dbReference type="PROSITE" id="PS00592">
    <property type="entry name" value="GH9_2"/>
    <property type="match status" value="1"/>
</dbReference>
<gene>
    <name type="ordered locus">At1g19940</name>
    <name type="ORF">F6F9.1</name>
    <name type="ORF">T20H2.27</name>
</gene>
<name>GUN2_ARATH</name>
<feature type="signal peptide" evidence="2">
    <location>
        <begin position="1"/>
        <end position="31"/>
    </location>
</feature>
<feature type="chain" id="PRO_0000249255" description="Endoglucanase 2">
    <location>
        <begin position="32"/>
        <end position="515"/>
    </location>
</feature>
<feature type="active site" description="Nucleophile" evidence="4">
    <location>
        <position position="100"/>
    </location>
</feature>
<feature type="active site" evidence="3">
    <location>
        <position position="433"/>
    </location>
</feature>
<feature type="active site" evidence="3">
    <location>
        <position position="480"/>
    </location>
</feature>
<feature type="active site" evidence="3">
    <location>
        <position position="489"/>
    </location>
</feature>
<feature type="glycosylation site" description="N-linked (GlcNAc...) asparagine" evidence="2">
    <location>
        <position position="37"/>
    </location>
</feature>
<feature type="glycosylation site" description="N-linked (GlcNAc...) asparagine" evidence="2">
    <location>
        <position position="250"/>
    </location>
</feature>
<feature type="glycosylation site" description="N-linked (GlcNAc...) asparagine" evidence="2">
    <location>
        <position position="475"/>
    </location>
</feature>
<feature type="glycosylation site" description="N-linked (GlcNAc...) asparagine" evidence="2">
    <location>
        <position position="483"/>
    </location>
</feature>
<keyword id="KW-0119">Carbohydrate metabolism</keyword>
<keyword id="KW-0961">Cell wall biogenesis/degradation</keyword>
<keyword id="KW-0136">Cellulose degradation</keyword>
<keyword id="KW-0325">Glycoprotein</keyword>
<keyword id="KW-0326">Glycosidase</keyword>
<keyword id="KW-0378">Hydrolase</keyword>
<keyword id="KW-0624">Polysaccharide degradation</keyword>
<keyword id="KW-1185">Reference proteome</keyword>
<keyword id="KW-0964">Secreted</keyword>
<keyword id="KW-0732">Signal</keyword>
<sequence>MVAKPRSRCCCCSVFIGVIILIAIIIAVIFTIRHRSNHSDDDGSNVKNYANALKIAMQFFDIQKSGKLENNEISWRGDSGLKDGSEASIDLSKGLYDAGDHMKFGFPMAFTATVLSWSILEYGDQMASLNLLDHAKDSLKWTTDFLINAHPSPNVLYIQVGDPVTDHKCWDRPETMTRKRTLTKIDTKTPGTEVAAETAAAMAAASLVFKESDTKYSSTLLKHAKQLFDFADNNRGSYSVNIPEVQSYYNSTGYGDELLWAASWLYHATEDQTYLDFVSENGEEFGNFGSPSWFSWDNKLPGTHILLSRLTFFKKGLSGSKGLQGFKETAEAVMCGLIPSSPTATSSRTDGGLIWVSEWNALQHPVSSAFLATLYSDYMLTSGVKELSCSDQSFKPSDLRKFARSQADYMLGKNPEKMSYLVGYGEKYPEFVHHRGASIPADATTGCKDGFKWLNSDEPNPNVAYGALVGGPFLNDTFIDARNNSMQNEPSTYNSALVVGLLSSLVTTSSSVESF</sequence>
<proteinExistence type="evidence at transcript level"/>
<evidence type="ECO:0000250" key="1"/>
<evidence type="ECO:0000255" key="2"/>
<evidence type="ECO:0000255" key="3">
    <source>
        <dbReference type="PROSITE-ProRule" id="PRU10059"/>
    </source>
</evidence>
<evidence type="ECO:0000255" key="4">
    <source>
        <dbReference type="PROSITE-ProRule" id="PRU10140"/>
    </source>
</evidence>
<evidence type="ECO:0000305" key="5"/>
<reference key="1">
    <citation type="journal article" date="2000" name="Nature">
        <title>Sequence and analysis of chromosome 1 of the plant Arabidopsis thaliana.</title>
        <authorList>
            <person name="Theologis A."/>
            <person name="Ecker J.R."/>
            <person name="Palm C.J."/>
            <person name="Federspiel N.A."/>
            <person name="Kaul S."/>
            <person name="White O."/>
            <person name="Alonso J."/>
            <person name="Altafi H."/>
            <person name="Araujo R."/>
            <person name="Bowman C.L."/>
            <person name="Brooks S.Y."/>
            <person name="Buehler E."/>
            <person name="Chan A."/>
            <person name="Chao Q."/>
            <person name="Chen H."/>
            <person name="Cheuk R.F."/>
            <person name="Chin C.W."/>
            <person name="Chung M.K."/>
            <person name="Conn L."/>
            <person name="Conway A.B."/>
            <person name="Conway A.R."/>
            <person name="Creasy T.H."/>
            <person name="Dewar K."/>
            <person name="Dunn P."/>
            <person name="Etgu P."/>
            <person name="Feldblyum T.V."/>
            <person name="Feng J.-D."/>
            <person name="Fong B."/>
            <person name="Fujii C.Y."/>
            <person name="Gill J.E."/>
            <person name="Goldsmith A.D."/>
            <person name="Haas B."/>
            <person name="Hansen N.F."/>
            <person name="Hughes B."/>
            <person name="Huizar L."/>
            <person name="Hunter J.L."/>
            <person name="Jenkins J."/>
            <person name="Johnson-Hopson C."/>
            <person name="Khan S."/>
            <person name="Khaykin E."/>
            <person name="Kim C.J."/>
            <person name="Koo H.L."/>
            <person name="Kremenetskaia I."/>
            <person name="Kurtz D.B."/>
            <person name="Kwan A."/>
            <person name="Lam B."/>
            <person name="Langin-Hooper S."/>
            <person name="Lee A."/>
            <person name="Lee J.M."/>
            <person name="Lenz C.A."/>
            <person name="Li J.H."/>
            <person name="Li Y.-P."/>
            <person name="Lin X."/>
            <person name="Liu S.X."/>
            <person name="Liu Z.A."/>
            <person name="Luros J.S."/>
            <person name="Maiti R."/>
            <person name="Marziali A."/>
            <person name="Militscher J."/>
            <person name="Miranda M."/>
            <person name="Nguyen M."/>
            <person name="Nierman W.C."/>
            <person name="Osborne B.I."/>
            <person name="Pai G."/>
            <person name="Peterson J."/>
            <person name="Pham P.K."/>
            <person name="Rizzo M."/>
            <person name="Rooney T."/>
            <person name="Rowley D."/>
            <person name="Sakano H."/>
            <person name="Salzberg S.L."/>
            <person name="Schwartz J.R."/>
            <person name="Shinn P."/>
            <person name="Southwick A.M."/>
            <person name="Sun H."/>
            <person name="Tallon L.J."/>
            <person name="Tambunga G."/>
            <person name="Toriumi M.J."/>
            <person name="Town C.D."/>
            <person name="Utterback T."/>
            <person name="Van Aken S."/>
            <person name="Vaysberg M."/>
            <person name="Vysotskaia V.S."/>
            <person name="Walker M."/>
            <person name="Wu D."/>
            <person name="Yu G."/>
            <person name="Fraser C.M."/>
            <person name="Venter J.C."/>
            <person name="Davis R.W."/>
        </authorList>
    </citation>
    <scope>NUCLEOTIDE SEQUENCE [LARGE SCALE GENOMIC DNA]</scope>
    <source>
        <strain>cv. Columbia</strain>
    </source>
</reference>
<reference key="2">
    <citation type="journal article" date="2017" name="Plant J.">
        <title>Araport11: a complete reannotation of the Arabidopsis thaliana reference genome.</title>
        <authorList>
            <person name="Cheng C.Y."/>
            <person name="Krishnakumar V."/>
            <person name="Chan A.P."/>
            <person name="Thibaud-Nissen F."/>
            <person name="Schobel S."/>
            <person name="Town C.D."/>
        </authorList>
    </citation>
    <scope>GENOME REANNOTATION</scope>
    <source>
        <strain>cv. Columbia</strain>
    </source>
</reference>
<reference key="3">
    <citation type="journal article" date="2003" name="Science">
        <title>Empirical analysis of transcriptional activity in the Arabidopsis genome.</title>
        <authorList>
            <person name="Yamada K."/>
            <person name="Lim J."/>
            <person name="Dale J.M."/>
            <person name="Chen H."/>
            <person name="Shinn P."/>
            <person name="Palm C.J."/>
            <person name="Southwick A.M."/>
            <person name="Wu H.C."/>
            <person name="Kim C.J."/>
            <person name="Nguyen M."/>
            <person name="Pham P.K."/>
            <person name="Cheuk R.F."/>
            <person name="Karlin-Newmann G."/>
            <person name="Liu S.X."/>
            <person name="Lam B."/>
            <person name="Sakano H."/>
            <person name="Wu T."/>
            <person name="Yu G."/>
            <person name="Miranda M."/>
            <person name="Quach H.L."/>
            <person name="Tripp M."/>
            <person name="Chang C.H."/>
            <person name="Lee J.M."/>
            <person name="Toriumi M.J."/>
            <person name="Chan M.M."/>
            <person name="Tang C.C."/>
            <person name="Onodera C.S."/>
            <person name="Deng J.M."/>
            <person name="Akiyama K."/>
            <person name="Ansari Y."/>
            <person name="Arakawa T."/>
            <person name="Banh J."/>
            <person name="Banno F."/>
            <person name="Bowser L."/>
            <person name="Brooks S.Y."/>
            <person name="Carninci P."/>
            <person name="Chao Q."/>
            <person name="Choy N."/>
            <person name="Enju A."/>
            <person name="Goldsmith A.D."/>
            <person name="Gurjal M."/>
            <person name="Hansen N.F."/>
            <person name="Hayashizaki Y."/>
            <person name="Johnson-Hopson C."/>
            <person name="Hsuan V.W."/>
            <person name="Iida K."/>
            <person name="Karnes M."/>
            <person name="Khan S."/>
            <person name="Koesema E."/>
            <person name="Ishida J."/>
            <person name="Jiang P.X."/>
            <person name="Jones T."/>
            <person name="Kawai J."/>
            <person name="Kamiya A."/>
            <person name="Meyers C."/>
            <person name="Nakajima M."/>
            <person name="Narusaka M."/>
            <person name="Seki M."/>
            <person name="Sakurai T."/>
            <person name="Satou M."/>
            <person name="Tamse R."/>
            <person name="Vaysberg M."/>
            <person name="Wallender E.K."/>
            <person name="Wong C."/>
            <person name="Yamamura Y."/>
            <person name="Yuan S."/>
            <person name="Shinozaki K."/>
            <person name="Davis R.W."/>
            <person name="Theologis A."/>
            <person name="Ecker J.R."/>
        </authorList>
    </citation>
    <scope>NUCLEOTIDE SEQUENCE [LARGE SCALE MRNA]</scope>
    <source>
        <strain>cv. Columbia</strain>
    </source>
</reference>
<reference key="4">
    <citation type="journal article" date="2004" name="J. Mol. Evol.">
        <title>Phylogenetic analysis of the plant endo-beta-1,4-glucanase gene family.</title>
        <authorList>
            <person name="Libertini E."/>
            <person name="Li Y."/>
            <person name="McQueen-Mason S.J."/>
        </authorList>
    </citation>
    <scope>GENE FAMILY</scope>
</reference>